<reference key="1">
    <citation type="journal article" date="2000" name="Science">
        <title>The genome sequence of Drosophila melanogaster.</title>
        <authorList>
            <person name="Adams M.D."/>
            <person name="Celniker S.E."/>
            <person name="Holt R.A."/>
            <person name="Evans C.A."/>
            <person name="Gocayne J.D."/>
            <person name="Amanatides P.G."/>
            <person name="Scherer S.E."/>
            <person name="Li P.W."/>
            <person name="Hoskins R.A."/>
            <person name="Galle R.F."/>
            <person name="George R.A."/>
            <person name="Lewis S.E."/>
            <person name="Richards S."/>
            <person name="Ashburner M."/>
            <person name="Henderson S.N."/>
            <person name="Sutton G.G."/>
            <person name="Wortman J.R."/>
            <person name="Yandell M.D."/>
            <person name="Zhang Q."/>
            <person name="Chen L.X."/>
            <person name="Brandon R.C."/>
            <person name="Rogers Y.-H.C."/>
            <person name="Blazej R.G."/>
            <person name="Champe M."/>
            <person name="Pfeiffer B.D."/>
            <person name="Wan K.H."/>
            <person name="Doyle C."/>
            <person name="Baxter E.G."/>
            <person name="Helt G."/>
            <person name="Nelson C.R."/>
            <person name="Miklos G.L.G."/>
            <person name="Abril J.F."/>
            <person name="Agbayani A."/>
            <person name="An H.-J."/>
            <person name="Andrews-Pfannkoch C."/>
            <person name="Baldwin D."/>
            <person name="Ballew R.M."/>
            <person name="Basu A."/>
            <person name="Baxendale J."/>
            <person name="Bayraktaroglu L."/>
            <person name="Beasley E.M."/>
            <person name="Beeson K.Y."/>
            <person name="Benos P.V."/>
            <person name="Berman B.P."/>
            <person name="Bhandari D."/>
            <person name="Bolshakov S."/>
            <person name="Borkova D."/>
            <person name="Botchan M.R."/>
            <person name="Bouck J."/>
            <person name="Brokstein P."/>
            <person name="Brottier P."/>
            <person name="Burtis K.C."/>
            <person name="Busam D.A."/>
            <person name="Butler H."/>
            <person name="Cadieu E."/>
            <person name="Center A."/>
            <person name="Chandra I."/>
            <person name="Cherry J.M."/>
            <person name="Cawley S."/>
            <person name="Dahlke C."/>
            <person name="Davenport L.B."/>
            <person name="Davies P."/>
            <person name="de Pablos B."/>
            <person name="Delcher A."/>
            <person name="Deng Z."/>
            <person name="Mays A.D."/>
            <person name="Dew I."/>
            <person name="Dietz S.M."/>
            <person name="Dodson K."/>
            <person name="Doup L.E."/>
            <person name="Downes M."/>
            <person name="Dugan-Rocha S."/>
            <person name="Dunkov B.C."/>
            <person name="Dunn P."/>
            <person name="Durbin K.J."/>
            <person name="Evangelista C.C."/>
            <person name="Ferraz C."/>
            <person name="Ferriera S."/>
            <person name="Fleischmann W."/>
            <person name="Fosler C."/>
            <person name="Gabrielian A.E."/>
            <person name="Garg N.S."/>
            <person name="Gelbart W.M."/>
            <person name="Glasser K."/>
            <person name="Glodek A."/>
            <person name="Gong F."/>
            <person name="Gorrell J.H."/>
            <person name="Gu Z."/>
            <person name="Guan P."/>
            <person name="Harris M."/>
            <person name="Harris N.L."/>
            <person name="Harvey D.A."/>
            <person name="Heiman T.J."/>
            <person name="Hernandez J.R."/>
            <person name="Houck J."/>
            <person name="Hostin D."/>
            <person name="Houston K.A."/>
            <person name="Howland T.J."/>
            <person name="Wei M.-H."/>
            <person name="Ibegwam C."/>
            <person name="Jalali M."/>
            <person name="Kalush F."/>
            <person name="Karpen G.H."/>
            <person name="Ke Z."/>
            <person name="Kennison J.A."/>
            <person name="Ketchum K.A."/>
            <person name="Kimmel B.E."/>
            <person name="Kodira C.D."/>
            <person name="Kraft C.L."/>
            <person name="Kravitz S."/>
            <person name="Kulp D."/>
            <person name="Lai Z."/>
            <person name="Lasko P."/>
            <person name="Lei Y."/>
            <person name="Levitsky A.A."/>
            <person name="Li J.H."/>
            <person name="Li Z."/>
            <person name="Liang Y."/>
            <person name="Lin X."/>
            <person name="Liu X."/>
            <person name="Mattei B."/>
            <person name="McIntosh T.C."/>
            <person name="McLeod M.P."/>
            <person name="McPherson D."/>
            <person name="Merkulov G."/>
            <person name="Milshina N.V."/>
            <person name="Mobarry C."/>
            <person name="Morris J."/>
            <person name="Moshrefi A."/>
            <person name="Mount S.M."/>
            <person name="Moy M."/>
            <person name="Murphy B."/>
            <person name="Murphy L."/>
            <person name="Muzny D.M."/>
            <person name="Nelson D.L."/>
            <person name="Nelson D.R."/>
            <person name="Nelson K.A."/>
            <person name="Nixon K."/>
            <person name="Nusskern D.R."/>
            <person name="Pacleb J.M."/>
            <person name="Palazzolo M."/>
            <person name="Pittman G.S."/>
            <person name="Pan S."/>
            <person name="Pollard J."/>
            <person name="Puri V."/>
            <person name="Reese M.G."/>
            <person name="Reinert K."/>
            <person name="Remington K."/>
            <person name="Saunders R.D.C."/>
            <person name="Scheeler F."/>
            <person name="Shen H."/>
            <person name="Shue B.C."/>
            <person name="Siden-Kiamos I."/>
            <person name="Simpson M."/>
            <person name="Skupski M.P."/>
            <person name="Smith T.J."/>
            <person name="Spier E."/>
            <person name="Spradling A.C."/>
            <person name="Stapleton M."/>
            <person name="Strong R."/>
            <person name="Sun E."/>
            <person name="Svirskas R."/>
            <person name="Tector C."/>
            <person name="Turner R."/>
            <person name="Venter E."/>
            <person name="Wang A.H."/>
            <person name="Wang X."/>
            <person name="Wang Z.-Y."/>
            <person name="Wassarman D.A."/>
            <person name="Weinstock G.M."/>
            <person name="Weissenbach J."/>
            <person name="Williams S.M."/>
            <person name="Woodage T."/>
            <person name="Worley K.C."/>
            <person name="Wu D."/>
            <person name="Yang S."/>
            <person name="Yao Q.A."/>
            <person name="Ye J."/>
            <person name="Yeh R.-F."/>
            <person name="Zaveri J.S."/>
            <person name="Zhan M."/>
            <person name="Zhang G."/>
            <person name="Zhao Q."/>
            <person name="Zheng L."/>
            <person name="Zheng X.H."/>
            <person name="Zhong F.N."/>
            <person name="Zhong W."/>
            <person name="Zhou X."/>
            <person name="Zhu S.C."/>
            <person name="Zhu X."/>
            <person name="Smith H.O."/>
            <person name="Gibbs R.A."/>
            <person name="Myers E.W."/>
            <person name="Rubin G.M."/>
            <person name="Venter J.C."/>
        </authorList>
    </citation>
    <scope>NUCLEOTIDE SEQUENCE [LARGE SCALE GENOMIC DNA]</scope>
    <source>
        <strain>Berkeley</strain>
    </source>
</reference>
<reference key="2">
    <citation type="journal article" date="2002" name="Genome Biol.">
        <title>Annotation of the Drosophila melanogaster euchromatic genome: a systematic review.</title>
        <authorList>
            <person name="Misra S."/>
            <person name="Crosby M.A."/>
            <person name="Mungall C.J."/>
            <person name="Matthews B.B."/>
            <person name="Campbell K.S."/>
            <person name="Hradecky P."/>
            <person name="Huang Y."/>
            <person name="Kaminker J.S."/>
            <person name="Millburn G.H."/>
            <person name="Prochnik S.E."/>
            <person name="Smith C.D."/>
            <person name="Tupy J.L."/>
            <person name="Whitfield E.J."/>
            <person name="Bayraktaroglu L."/>
            <person name="Berman B.P."/>
            <person name="Bettencourt B.R."/>
            <person name="Celniker S.E."/>
            <person name="de Grey A.D.N.J."/>
            <person name="Drysdale R.A."/>
            <person name="Harris N.L."/>
            <person name="Richter J."/>
            <person name="Russo S."/>
            <person name="Schroeder A.J."/>
            <person name="Shu S.Q."/>
            <person name="Stapleton M."/>
            <person name="Yamada C."/>
            <person name="Ashburner M."/>
            <person name="Gelbart W.M."/>
            <person name="Rubin G.M."/>
            <person name="Lewis S.E."/>
        </authorList>
    </citation>
    <scope>GENOME REANNOTATION</scope>
    <source>
        <strain>Berkeley</strain>
    </source>
</reference>
<reference key="3">
    <citation type="submission" date="2002-06" db="EMBL/GenBank/DDBJ databases">
        <authorList>
            <person name="Stapleton M."/>
            <person name="Brokstein P."/>
            <person name="Hong L."/>
            <person name="Agbayani A."/>
            <person name="Carlson J.W."/>
            <person name="Champe M."/>
            <person name="Chavez C."/>
            <person name="Dorsett V."/>
            <person name="Dresnek D."/>
            <person name="Farfan D."/>
            <person name="Frise E."/>
            <person name="George R.A."/>
            <person name="Gonzalez M."/>
            <person name="Guarin H."/>
            <person name="Kronmiller B."/>
            <person name="Li P.W."/>
            <person name="Liao G."/>
            <person name="Miranda A."/>
            <person name="Mungall C.J."/>
            <person name="Nunoo J."/>
            <person name="Pacleb J.M."/>
            <person name="Paragas V."/>
            <person name="Park S."/>
            <person name="Patel S."/>
            <person name="Phouanenavong S."/>
            <person name="Wan K.H."/>
            <person name="Yu C."/>
            <person name="Lewis S.E."/>
            <person name="Rubin G.M."/>
            <person name="Celniker S.E."/>
        </authorList>
    </citation>
    <scope>NUCLEOTIDE SEQUENCE [LARGE SCALE MRNA]</scope>
    <source>
        <strain>Berkeley</strain>
        <tissue>Embryo</tissue>
    </source>
</reference>
<reference key="4">
    <citation type="journal article" date="2000" name="J. Cell Biol.">
        <title>Drosophila melanogaster G protein-coupled receptors.</title>
        <authorList>
            <person name="Brody T."/>
            <person name="Cravchik A."/>
        </authorList>
    </citation>
    <scope>REVIEW</scope>
</reference>
<proteinExistence type="evidence at transcript level"/>
<evidence type="ECO:0000255" key="1"/>
<evidence type="ECO:0000305" key="2"/>
<organism>
    <name type="scientific">Drosophila melanogaster</name>
    <name type="common">Fruit fly</name>
    <dbReference type="NCBI Taxonomy" id="7227"/>
    <lineage>
        <taxon>Eukaryota</taxon>
        <taxon>Metazoa</taxon>
        <taxon>Ecdysozoa</taxon>
        <taxon>Arthropoda</taxon>
        <taxon>Hexapoda</taxon>
        <taxon>Insecta</taxon>
        <taxon>Pterygota</taxon>
        <taxon>Neoptera</taxon>
        <taxon>Endopterygota</taxon>
        <taxon>Diptera</taxon>
        <taxon>Brachycera</taxon>
        <taxon>Muscomorpha</taxon>
        <taxon>Ephydroidea</taxon>
        <taxon>Drosophilidae</taxon>
        <taxon>Drosophila</taxon>
        <taxon>Sophophora</taxon>
    </lineage>
</organism>
<dbReference type="EMBL" id="AE014297">
    <property type="protein sequence ID" value="AAF54714.3"/>
    <property type="molecule type" value="Genomic_DNA"/>
</dbReference>
<dbReference type="EMBL" id="AY121676">
    <property type="protein sequence ID" value="AAM52003.1"/>
    <property type="molecule type" value="mRNA"/>
</dbReference>
<dbReference type="RefSeq" id="NP_650126.2">
    <property type="nucleotide sequence ID" value="NM_141869.3"/>
</dbReference>
<dbReference type="SMR" id="Q9VGG8"/>
<dbReference type="BioGRID" id="66557">
    <property type="interactions" value="1"/>
</dbReference>
<dbReference type="FunCoup" id="Q9VGG8">
    <property type="interactions" value="14"/>
</dbReference>
<dbReference type="STRING" id="7227.FBpp0310692"/>
<dbReference type="GlyCosmos" id="Q9VGG8">
    <property type="glycosylation" value="1 site, No reported glycans"/>
</dbReference>
<dbReference type="GlyGen" id="Q9VGG8">
    <property type="glycosylation" value="1 site"/>
</dbReference>
<dbReference type="PaxDb" id="7227-FBpp0081989"/>
<dbReference type="DNASU" id="41438"/>
<dbReference type="EnsemblMetazoa" id="FBtr0082515">
    <property type="protein sequence ID" value="FBpp0081989"/>
    <property type="gene ID" value="FBgn0037960"/>
</dbReference>
<dbReference type="GeneID" id="41438"/>
<dbReference type="KEGG" id="dme:Dmel_CG6965"/>
<dbReference type="AGR" id="FB:FBgn0037960"/>
<dbReference type="CTD" id="41438"/>
<dbReference type="FlyBase" id="FBgn0037960">
    <property type="gene designation" value="mthl5"/>
</dbReference>
<dbReference type="VEuPathDB" id="VectorBase:FBgn0037960"/>
<dbReference type="eggNOG" id="KOG4193">
    <property type="taxonomic scope" value="Eukaryota"/>
</dbReference>
<dbReference type="InParanoid" id="Q9VGG8"/>
<dbReference type="OrthoDB" id="6339480at2759"/>
<dbReference type="PhylomeDB" id="Q9VGG8"/>
<dbReference type="BioGRID-ORCS" id="41438">
    <property type="hits" value="0 hits in 1 CRISPR screen"/>
</dbReference>
<dbReference type="GenomeRNAi" id="41438"/>
<dbReference type="PRO" id="PR:Q9VGG8"/>
<dbReference type="Proteomes" id="UP000000803">
    <property type="component" value="Chromosome 3R"/>
</dbReference>
<dbReference type="Bgee" id="FBgn0037960">
    <property type="expression patterns" value="Expressed in wing disc and 80 other cell types or tissues"/>
</dbReference>
<dbReference type="ExpressionAtlas" id="Q9VGG8">
    <property type="expression patterns" value="baseline and differential"/>
</dbReference>
<dbReference type="GO" id="GO:0016020">
    <property type="term" value="C:membrane"/>
    <property type="evidence" value="ECO:0000250"/>
    <property type="project" value="FlyBase"/>
</dbReference>
<dbReference type="GO" id="GO:0005886">
    <property type="term" value="C:plasma membrane"/>
    <property type="evidence" value="ECO:0007669"/>
    <property type="project" value="UniProtKB-SubCell"/>
</dbReference>
<dbReference type="GO" id="GO:0004930">
    <property type="term" value="F:G protein-coupled receptor activity"/>
    <property type="evidence" value="ECO:0000250"/>
    <property type="project" value="FlyBase"/>
</dbReference>
<dbReference type="GO" id="GO:0007166">
    <property type="term" value="P:cell surface receptor signaling pathway"/>
    <property type="evidence" value="ECO:0007669"/>
    <property type="project" value="InterPro"/>
</dbReference>
<dbReference type="GO" id="GO:0008340">
    <property type="term" value="P:determination of adult lifespan"/>
    <property type="evidence" value="ECO:0000250"/>
    <property type="project" value="UniProtKB"/>
</dbReference>
<dbReference type="GO" id="GO:0007186">
    <property type="term" value="P:G protein-coupled receptor signaling pathway"/>
    <property type="evidence" value="ECO:0000250"/>
    <property type="project" value="FlyBase"/>
</dbReference>
<dbReference type="GO" id="GO:0003007">
    <property type="term" value="P:heart morphogenesis"/>
    <property type="evidence" value="ECO:0000315"/>
    <property type="project" value="FlyBase"/>
</dbReference>
<dbReference type="GO" id="GO:0042594">
    <property type="term" value="P:response to starvation"/>
    <property type="evidence" value="ECO:0000250"/>
    <property type="project" value="UniProtKB"/>
</dbReference>
<dbReference type="CDD" id="cd15039">
    <property type="entry name" value="7tmB3_Methuselah-like"/>
    <property type="match status" value="1"/>
</dbReference>
<dbReference type="FunFam" id="1.20.1070.10:FF:000341">
    <property type="entry name" value="Methuselah-like 5, isoform B"/>
    <property type="match status" value="1"/>
</dbReference>
<dbReference type="Gene3D" id="1.20.1070.10">
    <property type="entry name" value="Rhodopsin 7-helix transmembrane proteins"/>
    <property type="match status" value="1"/>
</dbReference>
<dbReference type="InterPro" id="IPR017981">
    <property type="entry name" value="GPCR_2-like_7TM"/>
</dbReference>
<dbReference type="InterPro" id="IPR000832">
    <property type="entry name" value="GPCR_2_secretin-like"/>
</dbReference>
<dbReference type="InterPro" id="IPR052808">
    <property type="entry name" value="GPCR_Mth-like"/>
</dbReference>
<dbReference type="PANTHER" id="PTHR46953">
    <property type="entry name" value="G-PROTEIN COUPLED RECEPTOR MTH-LIKE 1-RELATED"/>
    <property type="match status" value="1"/>
</dbReference>
<dbReference type="PANTHER" id="PTHR46953:SF2">
    <property type="entry name" value="G-PROTEIN COUPLED RECEPTOR MTH-LIKE 5-RELATED"/>
    <property type="match status" value="1"/>
</dbReference>
<dbReference type="PRINTS" id="PR00249">
    <property type="entry name" value="GPCRSECRETIN"/>
</dbReference>
<dbReference type="PROSITE" id="PS50261">
    <property type="entry name" value="G_PROTEIN_RECEP_F2_4"/>
    <property type="match status" value="1"/>
</dbReference>
<accession>Q9VGG8</accession>
<accession>Q8MRB8</accession>
<keyword id="KW-1003">Cell membrane</keyword>
<keyword id="KW-0297">G-protein coupled receptor</keyword>
<keyword id="KW-0325">Glycoprotein</keyword>
<keyword id="KW-0472">Membrane</keyword>
<keyword id="KW-0675">Receptor</keyword>
<keyword id="KW-1185">Reference proteome</keyword>
<keyword id="KW-0807">Transducer</keyword>
<keyword id="KW-0812">Transmembrane</keyword>
<keyword id="KW-1133">Transmembrane helix</keyword>
<feature type="chain" id="PRO_0000195160" description="Probable G-protein coupled receptor Mth-like 5">
    <location>
        <begin position="1"/>
        <end position="496"/>
    </location>
</feature>
<feature type="topological domain" description="Extracellular" evidence="1">
    <location>
        <begin position="1"/>
        <end position="219"/>
    </location>
</feature>
<feature type="transmembrane region" description="Helical; Name=1" evidence="1">
    <location>
        <begin position="220"/>
        <end position="240"/>
    </location>
</feature>
<feature type="topological domain" description="Cytoplasmic" evidence="1">
    <location>
        <begin position="241"/>
        <end position="246"/>
    </location>
</feature>
<feature type="transmembrane region" description="Helical; Name=2" evidence="1">
    <location>
        <begin position="247"/>
        <end position="267"/>
    </location>
</feature>
<feature type="topological domain" description="Extracellular" evidence="1">
    <location>
        <begin position="268"/>
        <end position="276"/>
    </location>
</feature>
<feature type="transmembrane region" description="Helical; Name=3" evidence="1">
    <location>
        <begin position="277"/>
        <end position="297"/>
    </location>
</feature>
<feature type="topological domain" description="Cytoplasmic" evidence="1">
    <location>
        <begin position="298"/>
        <end position="327"/>
    </location>
</feature>
<feature type="transmembrane region" description="Helical; Name=4" evidence="1">
    <location>
        <begin position="328"/>
        <end position="348"/>
    </location>
</feature>
<feature type="topological domain" description="Extracellular" evidence="1">
    <location>
        <begin position="349"/>
        <end position="366"/>
    </location>
</feature>
<feature type="transmembrane region" description="Helical; Name=5" evidence="1">
    <location>
        <begin position="367"/>
        <end position="387"/>
    </location>
</feature>
<feature type="topological domain" description="Cytoplasmic" evidence="1">
    <location>
        <begin position="388"/>
        <end position="411"/>
    </location>
</feature>
<feature type="transmembrane region" description="Helical; Name=6" evidence="1">
    <location>
        <begin position="412"/>
        <end position="432"/>
    </location>
</feature>
<feature type="topological domain" description="Extracellular" evidence="1">
    <location>
        <begin position="433"/>
        <end position="438"/>
    </location>
</feature>
<feature type="transmembrane region" description="Helical; Name=7" evidence="1">
    <location>
        <begin position="439"/>
        <end position="459"/>
    </location>
</feature>
<feature type="topological domain" description="Cytoplasmic" evidence="1">
    <location>
        <begin position="460"/>
        <end position="496"/>
    </location>
</feature>
<feature type="glycosylation site" description="N-linked (GlcNAc...) asparagine" evidence="1">
    <location>
        <position position="82"/>
    </location>
</feature>
<feature type="sequence conflict" description="In Ref. 3; AAM52003." evidence="2" ref="3">
    <original>V</original>
    <variation>F</variation>
    <location>
        <position position="63"/>
    </location>
</feature>
<sequence length="496" mass="56351">MLVKTLGAHFAAGQNAKKCSCCALLISLLCVLLLSLNPLPVTSHVTSAGSSTALSSDPNLVLVNKCCEKFEIHVDHECQQVNETDYFQPMFTSYGGEQNRPVKFKFVIGIPNCGSMQMWPIYHYAGSSDKLVLLDDGRLRHYTNAENEAEERHGIQSDYEEDIAGSLEPLYHDYDKGLYCIDKATSSTGEENVLFANICLARKEIKWSDSNFLLRKILNPIFHGISLVILLVIAIIYFILPTLRDLVGNIVTTIAMCLMVSQAADLVRIFTELTSHVSFIVADIILCFSLLAAFFWLNSFGFYIWKTFRSRNVFLRVTDGRKYCYYSAYAWGCTATMAALAVFAHFFLDAESYKQEHMVGEQETIGWLGICIFFAPIACTILVNIFFYVTTRKLINRRTVYGRIAHKLKANFIMFSLMLLVMSIAWLFLIMSWLQMEGLLYAHIVVNALQTPLLLYICVLRQRHVTFLLKKTCCYNEPPSANDWGDELHYMNGNDY</sequence>
<name>MTH5_DROME</name>
<gene>
    <name type="primary">mthl5</name>
    <name type="ORF">CG6965</name>
</gene>
<protein>
    <recommendedName>
        <fullName>Probable G-protein coupled receptor Mth-like 5</fullName>
    </recommendedName>
    <alternativeName>
        <fullName>Protein methuselah-like 5</fullName>
    </alternativeName>
</protein>
<comment type="subcellular location">
    <subcellularLocation>
        <location evidence="2">Cell membrane</location>
        <topology evidence="2">Multi-pass membrane protein</topology>
    </subcellularLocation>
</comment>
<comment type="similarity">
    <text evidence="2">Belongs to the G-protein coupled receptor 2 family. Mth subfamily.</text>
</comment>